<organism>
    <name type="scientific">Salmonella paratyphi C (strain RKS4594)</name>
    <dbReference type="NCBI Taxonomy" id="476213"/>
    <lineage>
        <taxon>Bacteria</taxon>
        <taxon>Pseudomonadati</taxon>
        <taxon>Pseudomonadota</taxon>
        <taxon>Gammaproteobacteria</taxon>
        <taxon>Enterobacterales</taxon>
        <taxon>Enterobacteriaceae</taxon>
        <taxon>Salmonella</taxon>
    </lineage>
</organism>
<accession>C0Q7K3</accession>
<evidence type="ECO:0000255" key="1">
    <source>
        <dbReference type="HAMAP-Rule" id="MF_01061"/>
    </source>
</evidence>
<evidence type="ECO:0000256" key="2">
    <source>
        <dbReference type="SAM" id="MobiDB-lite"/>
    </source>
</evidence>
<keyword id="KW-0235">DNA replication</keyword>
<keyword id="KW-0238">DNA-binding</keyword>
<keyword id="KW-0639">Primosome</keyword>
<name>DNAT_SALPC</name>
<comment type="function">
    <text evidence="1">Involved in the restart of stalled replication forks, which reloads the replicative helicase on sites other than the origin of replication. Can function in multiple replication restart pathways. Displaces ssDNA from a PriB-ssDNA complex. Probably forms a spiral filament on ssDNA.</text>
</comment>
<comment type="subunit">
    <text evidence="1">Homooligomerizes. Interacts with PriB. Component of the replication restart primosome. Primosome assembly occurs via a 'hand-off' mechanism. PriA binds to replication forks, subsequently PriB then DnaT bind; DnaT then displaces ssDNA to generate the helicase loading substrate.</text>
</comment>
<comment type="similarity">
    <text evidence="1">Belongs to the DnaT family.</text>
</comment>
<sequence length="179" mass="19506">MSSRILTSDVIGIDVLLHDHHAVLAKSTGGAVAVFANNAPAFYAVTPARMAELLALEEKLSRPGSDVALDAQFYEEPEAAPVAIPCGKFAMYPAWQPDADFQRQAALWGVALREPVTAEELAAFIAYWQAEGKVFHHIQWQQKLARSVQISRSSNGGMPQRDINSVSEPDNHIPPGFRG</sequence>
<dbReference type="EMBL" id="CP000857">
    <property type="protein sequence ID" value="ACN48726.1"/>
    <property type="molecule type" value="Genomic_DNA"/>
</dbReference>
<dbReference type="RefSeq" id="WP_000098578.1">
    <property type="nucleotide sequence ID" value="NC_012125.1"/>
</dbReference>
<dbReference type="SMR" id="C0Q7K3"/>
<dbReference type="KEGG" id="sei:SPC_4682"/>
<dbReference type="HOGENOM" id="CLU_1501592_0_0_6"/>
<dbReference type="Proteomes" id="UP000001599">
    <property type="component" value="Chromosome"/>
</dbReference>
<dbReference type="GO" id="GO:1990077">
    <property type="term" value="C:primosome complex"/>
    <property type="evidence" value="ECO:0007669"/>
    <property type="project" value="UniProtKB-KW"/>
</dbReference>
<dbReference type="GO" id="GO:0006269">
    <property type="term" value="P:DNA replication, synthesis of primer"/>
    <property type="evidence" value="ECO:0007669"/>
    <property type="project" value="UniProtKB-UniRule"/>
</dbReference>
<dbReference type="Gene3D" id="1.10.8.1180">
    <property type="match status" value="1"/>
</dbReference>
<dbReference type="HAMAP" id="MF_01061">
    <property type="entry name" value="DnaT"/>
    <property type="match status" value="1"/>
</dbReference>
<dbReference type="InterPro" id="IPR020917">
    <property type="entry name" value="DnaT"/>
</dbReference>
<dbReference type="InterPro" id="IPR040480">
    <property type="entry name" value="DnaT_DNA_bind"/>
</dbReference>
<dbReference type="NCBIfam" id="NF002770">
    <property type="entry name" value="PRK02854.1"/>
    <property type="match status" value="1"/>
</dbReference>
<dbReference type="Pfam" id="PF17948">
    <property type="entry name" value="DnaT"/>
    <property type="match status" value="1"/>
</dbReference>
<reference key="1">
    <citation type="journal article" date="2009" name="PLoS ONE">
        <title>Salmonella paratyphi C: genetic divergence from Salmonella choleraesuis and pathogenic convergence with Salmonella typhi.</title>
        <authorList>
            <person name="Liu W.-Q."/>
            <person name="Feng Y."/>
            <person name="Wang Y."/>
            <person name="Zou Q.-H."/>
            <person name="Chen F."/>
            <person name="Guo J.-T."/>
            <person name="Peng Y.-H."/>
            <person name="Jin Y."/>
            <person name="Li Y.-G."/>
            <person name="Hu S.-N."/>
            <person name="Johnston R.N."/>
            <person name="Liu G.-R."/>
            <person name="Liu S.-L."/>
        </authorList>
    </citation>
    <scope>NUCLEOTIDE SEQUENCE [LARGE SCALE GENOMIC DNA]</scope>
    <source>
        <strain>RKS4594</strain>
    </source>
</reference>
<gene>
    <name evidence="1" type="primary">dnaT</name>
    <name type="ordered locus">SPC_4682</name>
</gene>
<protein>
    <recommendedName>
        <fullName evidence="1">Replication restart protein DnaT</fullName>
    </recommendedName>
</protein>
<proteinExistence type="inferred from homology"/>
<feature type="chain" id="PRO_1000149695" description="Replication restart protein DnaT">
    <location>
        <begin position="1"/>
        <end position="179"/>
    </location>
</feature>
<feature type="region of interest" description="Disordered" evidence="2">
    <location>
        <begin position="151"/>
        <end position="179"/>
    </location>
</feature>
<feature type="compositionally biased region" description="Polar residues" evidence="2">
    <location>
        <begin position="151"/>
        <end position="168"/>
    </location>
</feature>